<organism>
    <name type="scientific">Homo sapiens</name>
    <name type="common">Human</name>
    <dbReference type="NCBI Taxonomy" id="9606"/>
    <lineage>
        <taxon>Eukaryota</taxon>
        <taxon>Metazoa</taxon>
        <taxon>Chordata</taxon>
        <taxon>Craniata</taxon>
        <taxon>Vertebrata</taxon>
        <taxon>Euteleostomi</taxon>
        <taxon>Mammalia</taxon>
        <taxon>Eutheria</taxon>
        <taxon>Euarchontoglires</taxon>
        <taxon>Primates</taxon>
        <taxon>Haplorrhini</taxon>
        <taxon>Catarrhini</taxon>
        <taxon>Hominidae</taxon>
        <taxon>Homo</taxon>
    </lineage>
</organism>
<gene>
    <name type="primary">CDK10</name>
</gene>
<reference key="1">
    <citation type="journal article" date="1994" name="Oncogene">
        <title>PISSLRE, a human novel CDC2-related protein kinase.</title>
        <authorList>
            <person name="Grana X."/>
            <person name="Claudio P.P."/>
            <person name="De Luca A."/>
            <person name="Sang N."/>
            <person name="Giordano A."/>
        </authorList>
    </citation>
    <scope>NUCLEOTIDE SEQUENCE [MRNA] (ISOFORM 4)</scope>
</reference>
<reference key="2">
    <citation type="submission" date="2000-06" db="EMBL/GenBank/DDBJ databases">
        <authorList>
            <person name="Grana X."/>
            <person name="Claudio P.P."/>
            <person name="De Luca A."/>
            <person name="Sang N."/>
            <person name="Giordano A."/>
        </authorList>
    </citation>
    <scope>SEQUENCE REVISION</scope>
</reference>
<reference key="3">
    <citation type="journal article" date="1994" name="Oncogene">
        <title>Molecular cloning of PISSLRE, a novel putative member of the cdk family of protein serine/threonine kinases.</title>
        <authorList>
            <person name="Brambilla R."/>
            <person name="Draetta G."/>
        </authorList>
    </citation>
    <scope>NUCLEOTIDE SEQUENCE [MRNA] (ISOFORM 1)</scope>
</reference>
<reference key="4">
    <citation type="journal article" date="1999" name="Genomics">
        <title>The PISSLRE gene: structure, exon skipping, and exclusion as tumor suppressor in breast cancer.</title>
        <authorList>
            <person name="Crawford J."/>
            <person name="Ianzano L."/>
            <person name="Savino M."/>
            <person name="Whitmore S."/>
            <person name="Cleton-Jansen A.-M."/>
            <person name="Settasatiani C."/>
            <person name="D'Apolito M."/>
            <person name="Seshadri R."/>
            <person name="Pronk J.C."/>
            <person name="Auerbach A.D."/>
            <person name="Verlander P.C."/>
            <person name="Mathew C.G."/>
            <person name="Tipping A.J."/>
            <person name="Doggett N.A."/>
            <person name="Zelante L."/>
            <person name="Callen D.F."/>
            <person name="Savoia A."/>
        </authorList>
    </citation>
    <scope>NUCLEOTIDE SEQUENCE [GENOMIC DNA]</scope>
</reference>
<reference key="5">
    <citation type="journal article" date="2004" name="Nat. Genet.">
        <title>Complete sequencing and characterization of 21,243 full-length human cDNAs.</title>
        <authorList>
            <person name="Ota T."/>
            <person name="Suzuki Y."/>
            <person name="Nishikawa T."/>
            <person name="Otsuki T."/>
            <person name="Sugiyama T."/>
            <person name="Irie R."/>
            <person name="Wakamatsu A."/>
            <person name="Hayashi K."/>
            <person name="Sato H."/>
            <person name="Nagai K."/>
            <person name="Kimura K."/>
            <person name="Makita H."/>
            <person name="Sekine M."/>
            <person name="Obayashi M."/>
            <person name="Nishi T."/>
            <person name="Shibahara T."/>
            <person name="Tanaka T."/>
            <person name="Ishii S."/>
            <person name="Yamamoto J."/>
            <person name="Saito K."/>
            <person name="Kawai Y."/>
            <person name="Isono Y."/>
            <person name="Nakamura Y."/>
            <person name="Nagahari K."/>
            <person name="Murakami K."/>
            <person name="Yasuda T."/>
            <person name="Iwayanagi T."/>
            <person name="Wagatsuma M."/>
            <person name="Shiratori A."/>
            <person name="Sudo H."/>
            <person name="Hosoiri T."/>
            <person name="Kaku Y."/>
            <person name="Kodaira H."/>
            <person name="Kondo H."/>
            <person name="Sugawara M."/>
            <person name="Takahashi M."/>
            <person name="Kanda K."/>
            <person name="Yokoi T."/>
            <person name="Furuya T."/>
            <person name="Kikkawa E."/>
            <person name="Omura Y."/>
            <person name="Abe K."/>
            <person name="Kamihara K."/>
            <person name="Katsuta N."/>
            <person name="Sato K."/>
            <person name="Tanikawa M."/>
            <person name="Yamazaki M."/>
            <person name="Ninomiya K."/>
            <person name="Ishibashi T."/>
            <person name="Yamashita H."/>
            <person name="Murakawa K."/>
            <person name="Fujimori K."/>
            <person name="Tanai H."/>
            <person name="Kimata M."/>
            <person name="Watanabe M."/>
            <person name="Hiraoka S."/>
            <person name="Chiba Y."/>
            <person name="Ishida S."/>
            <person name="Ono Y."/>
            <person name="Takiguchi S."/>
            <person name="Watanabe S."/>
            <person name="Yosida M."/>
            <person name="Hotuta T."/>
            <person name="Kusano J."/>
            <person name="Kanehori K."/>
            <person name="Takahashi-Fujii A."/>
            <person name="Hara H."/>
            <person name="Tanase T.-O."/>
            <person name="Nomura Y."/>
            <person name="Togiya S."/>
            <person name="Komai F."/>
            <person name="Hara R."/>
            <person name="Takeuchi K."/>
            <person name="Arita M."/>
            <person name="Imose N."/>
            <person name="Musashino K."/>
            <person name="Yuuki H."/>
            <person name="Oshima A."/>
            <person name="Sasaki N."/>
            <person name="Aotsuka S."/>
            <person name="Yoshikawa Y."/>
            <person name="Matsunawa H."/>
            <person name="Ichihara T."/>
            <person name="Shiohata N."/>
            <person name="Sano S."/>
            <person name="Moriya S."/>
            <person name="Momiyama H."/>
            <person name="Satoh N."/>
            <person name="Takami S."/>
            <person name="Terashima Y."/>
            <person name="Suzuki O."/>
            <person name="Nakagawa S."/>
            <person name="Senoh A."/>
            <person name="Mizoguchi H."/>
            <person name="Goto Y."/>
            <person name="Shimizu F."/>
            <person name="Wakebe H."/>
            <person name="Hishigaki H."/>
            <person name="Watanabe T."/>
            <person name="Sugiyama A."/>
            <person name="Takemoto M."/>
            <person name="Kawakami B."/>
            <person name="Yamazaki M."/>
            <person name="Watanabe K."/>
            <person name="Kumagai A."/>
            <person name="Itakura S."/>
            <person name="Fukuzumi Y."/>
            <person name="Fujimori Y."/>
            <person name="Komiyama M."/>
            <person name="Tashiro H."/>
            <person name="Tanigami A."/>
            <person name="Fujiwara T."/>
            <person name="Ono T."/>
            <person name="Yamada K."/>
            <person name="Fujii Y."/>
            <person name="Ozaki K."/>
            <person name="Hirao M."/>
            <person name="Ohmori Y."/>
            <person name="Kawabata A."/>
            <person name="Hikiji T."/>
            <person name="Kobatake N."/>
            <person name="Inagaki H."/>
            <person name="Ikema Y."/>
            <person name="Okamoto S."/>
            <person name="Okitani R."/>
            <person name="Kawakami T."/>
            <person name="Noguchi S."/>
            <person name="Itoh T."/>
            <person name="Shigeta K."/>
            <person name="Senba T."/>
            <person name="Matsumura K."/>
            <person name="Nakajima Y."/>
            <person name="Mizuno T."/>
            <person name="Morinaga M."/>
            <person name="Sasaki M."/>
            <person name="Togashi T."/>
            <person name="Oyama M."/>
            <person name="Hata H."/>
            <person name="Watanabe M."/>
            <person name="Komatsu T."/>
            <person name="Mizushima-Sugano J."/>
            <person name="Satoh T."/>
            <person name="Shirai Y."/>
            <person name="Takahashi Y."/>
            <person name="Nakagawa K."/>
            <person name="Okumura K."/>
            <person name="Nagase T."/>
            <person name="Nomura N."/>
            <person name="Kikuchi H."/>
            <person name="Masuho Y."/>
            <person name="Yamashita R."/>
            <person name="Nakai K."/>
            <person name="Yada T."/>
            <person name="Nakamura Y."/>
            <person name="Ohara O."/>
            <person name="Isogai T."/>
            <person name="Sugano S."/>
        </authorList>
    </citation>
    <scope>NUCLEOTIDE SEQUENCE [LARGE SCALE MRNA] (ISOFORMS 2; 5; 6 AND 7)</scope>
    <source>
        <tissue>Brain</tissue>
        <tissue>Colon</tissue>
        <tissue>Ovary</tissue>
        <tissue>Testis</tissue>
    </source>
</reference>
<reference key="6">
    <citation type="submission" date="2006-07" db="EMBL/GenBank/DDBJ databases">
        <authorList>
            <person name="Bechtel S."/>
            <person name="Schupp I."/>
            <person name="Duda A."/>
            <person name="Wellenreuther R."/>
            <person name="Mehrle A."/>
            <person name="Ruschke V."/>
            <person name="Poustka A."/>
            <person name="Wiemann S."/>
        </authorList>
    </citation>
    <scope>NUCLEOTIDE SEQUENCE [LARGE SCALE MRNA] (ISOFORM 3)</scope>
</reference>
<reference key="7">
    <citation type="journal article" date="2004" name="Nature">
        <title>The sequence and analysis of duplication-rich human chromosome 16.</title>
        <authorList>
            <person name="Martin J."/>
            <person name="Han C."/>
            <person name="Gordon L.A."/>
            <person name="Terry A."/>
            <person name="Prabhakar S."/>
            <person name="She X."/>
            <person name="Xie G."/>
            <person name="Hellsten U."/>
            <person name="Chan Y.M."/>
            <person name="Altherr M."/>
            <person name="Couronne O."/>
            <person name="Aerts A."/>
            <person name="Bajorek E."/>
            <person name="Black S."/>
            <person name="Blumer H."/>
            <person name="Branscomb E."/>
            <person name="Brown N.C."/>
            <person name="Bruno W.J."/>
            <person name="Buckingham J.M."/>
            <person name="Callen D.F."/>
            <person name="Campbell C.S."/>
            <person name="Campbell M.L."/>
            <person name="Campbell E.W."/>
            <person name="Caoile C."/>
            <person name="Challacombe J.F."/>
            <person name="Chasteen L.A."/>
            <person name="Chertkov O."/>
            <person name="Chi H.C."/>
            <person name="Christensen M."/>
            <person name="Clark L.M."/>
            <person name="Cohn J.D."/>
            <person name="Denys M."/>
            <person name="Detter J.C."/>
            <person name="Dickson M."/>
            <person name="Dimitrijevic-Bussod M."/>
            <person name="Escobar J."/>
            <person name="Fawcett J.J."/>
            <person name="Flowers D."/>
            <person name="Fotopulos D."/>
            <person name="Glavina T."/>
            <person name="Gomez M."/>
            <person name="Gonzales E."/>
            <person name="Goodstein D."/>
            <person name="Goodwin L.A."/>
            <person name="Grady D.L."/>
            <person name="Grigoriev I."/>
            <person name="Groza M."/>
            <person name="Hammon N."/>
            <person name="Hawkins T."/>
            <person name="Haydu L."/>
            <person name="Hildebrand C.E."/>
            <person name="Huang W."/>
            <person name="Israni S."/>
            <person name="Jett J."/>
            <person name="Jewett P.B."/>
            <person name="Kadner K."/>
            <person name="Kimball H."/>
            <person name="Kobayashi A."/>
            <person name="Krawczyk M.-C."/>
            <person name="Leyba T."/>
            <person name="Longmire J.L."/>
            <person name="Lopez F."/>
            <person name="Lou Y."/>
            <person name="Lowry S."/>
            <person name="Ludeman T."/>
            <person name="Manohar C.F."/>
            <person name="Mark G.A."/>
            <person name="McMurray K.L."/>
            <person name="Meincke L.J."/>
            <person name="Morgan J."/>
            <person name="Moyzis R.K."/>
            <person name="Mundt M.O."/>
            <person name="Munk A.C."/>
            <person name="Nandkeshwar R.D."/>
            <person name="Pitluck S."/>
            <person name="Pollard M."/>
            <person name="Predki P."/>
            <person name="Parson-Quintana B."/>
            <person name="Ramirez L."/>
            <person name="Rash S."/>
            <person name="Retterer J."/>
            <person name="Ricke D.O."/>
            <person name="Robinson D.L."/>
            <person name="Rodriguez A."/>
            <person name="Salamov A."/>
            <person name="Saunders E.H."/>
            <person name="Scott D."/>
            <person name="Shough T."/>
            <person name="Stallings R.L."/>
            <person name="Stalvey M."/>
            <person name="Sutherland R.D."/>
            <person name="Tapia R."/>
            <person name="Tesmer J.G."/>
            <person name="Thayer N."/>
            <person name="Thompson L.S."/>
            <person name="Tice H."/>
            <person name="Torney D.C."/>
            <person name="Tran-Gyamfi M."/>
            <person name="Tsai M."/>
            <person name="Ulanovsky L.E."/>
            <person name="Ustaszewska A."/>
            <person name="Vo N."/>
            <person name="White P.S."/>
            <person name="Williams A.L."/>
            <person name="Wills P.L."/>
            <person name="Wu J.-R."/>
            <person name="Wu K."/>
            <person name="Yang J."/>
            <person name="DeJong P."/>
            <person name="Bruce D."/>
            <person name="Doggett N.A."/>
            <person name="Deaven L."/>
            <person name="Schmutz J."/>
            <person name="Grimwood J."/>
            <person name="Richardson P."/>
            <person name="Rokhsar D.S."/>
            <person name="Eichler E.E."/>
            <person name="Gilna P."/>
            <person name="Lucas S.M."/>
            <person name="Myers R.M."/>
            <person name="Rubin E.M."/>
            <person name="Pennacchio L.A."/>
        </authorList>
    </citation>
    <scope>NUCLEOTIDE SEQUENCE [LARGE SCALE GENOMIC DNA]</scope>
</reference>
<reference key="8">
    <citation type="submission" date="2005-09" db="EMBL/GenBank/DDBJ databases">
        <authorList>
            <person name="Mural R.J."/>
            <person name="Istrail S."/>
            <person name="Sutton G.G."/>
            <person name="Florea L."/>
            <person name="Halpern A.L."/>
            <person name="Mobarry C.M."/>
            <person name="Lippert R."/>
            <person name="Walenz B."/>
            <person name="Shatkay H."/>
            <person name="Dew I."/>
            <person name="Miller J.R."/>
            <person name="Flanigan M.J."/>
            <person name="Edwards N.J."/>
            <person name="Bolanos R."/>
            <person name="Fasulo D."/>
            <person name="Halldorsson B.V."/>
            <person name="Hannenhalli S."/>
            <person name="Turner R."/>
            <person name="Yooseph S."/>
            <person name="Lu F."/>
            <person name="Nusskern D.R."/>
            <person name="Shue B.C."/>
            <person name="Zheng X.H."/>
            <person name="Zhong F."/>
            <person name="Delcher A.L."/>
            <person name="Huson D.H."/>
            <person name="Kravitz S.A."/>
            <person name="Mouchard L."/>
            <person name="Reinert K."/>
            <person name="Remington K.A."/>
            <person name="Clark A.G."/>
            <person name="Waterman M.S."/>
            <person name="Eichler E.E."/>
            <person name="Adams M.D."/>
            <person name="Hunkapiller M.W."/>
            <person name="Myers E.W."/>
            <person name="Venter J.C."/>
        </authorList>
    </citation>
    <scope>NUCLEOTIDE SEQUENCE [LARGE SCALE GENOMIC DNA]</scope>
</reference>
<reference key="9">
    <citation type="journal article" date="2004" name="Genome Res.">
        <title>The status, quality, and expansion of the NIH full-length cDNA project: the Mammalian Gene Collection (MGC).</title>
        <authorList>
            <consortium name="The MGC Project Team"/>
        </authorList>
    </citation>
    <scope>NUCLEOTIDE SEQUENCE [LARGE SCALE MRNA] (ISOFORMS 3 AND 4)</scope>
    <source>
        <tissue>Colon</tissue>
        <tissue>Lung</tissue>
    </source>
</reference>
<reference key="10">
    <citation type="journal article" date="2008" name="Mol. Cell">
        <title>Kinase-selective enrichment enables quantitative phosphoproteomics of the kinome across the cell cycle.</title>
        <authorList>
            <person name="Daub H."/>
            <person name="Olsen J.V."/>
            <person name="Bairlein M."/>
            <person name="Gnad F."/>
            <person name="Oppermann F.S."/>
            <person name="Korner R."/>
            <person name="Greff Z."/>
            <person name="Keri G."/>
            <person name="Stemmann O."/>
            <person name="Mann M."/>
        </authorList>
    </citation>
    <scope>PHOSPHORYLATION [LARGE SCALE ANALYSIS] AT THR-196</scope>
    <scope>IDENTIFICATION BY MASS SPECTROMETRY [LARGE SCALE ANALYSIS]</scope>
    <source>
        <tissue>Cervix carcinoma</tissue>
    </source>
</reference>
<reference key="11">
    <citation type="journal article" date="2008" name="Proc. Natl. Acad. Sci. U.S.A.">
        <title>A quantitative atlas of mitotic phosphorylation.</title>
        <authorList>
            <person name="Dephoure N."/>
            <person name="Zhou C."/>
            <person name="Villen J."/>
            <person name="Beausoleil S.A."/>
            <person name="Bakalarski C.E."/>
            <person name="Elledge S.J."/>
            <person name="Gygi S.P."/>
        </authorList>
    </citation>
    <scope>PHOSPHORYLATION [LARGE SCALE ANALYSIS] AT THR-196</scope>
    <scope>IDENTIFICATION BY MASS SPECTROMETRY [LARGE SCALE ANALYSIS]</scope>
    <source>
        <tissue>Cervix carcinoma</tissue>
    </source>
</reference>
<reference key="12">
    <citation type="journal article" date="2013" name="Proc. Natl. Acad. Sci. U.S.A.">
        <title>CDK10/cyclin M is a protein kinase that controls ETS2 degradation and is deficient in STAR syndrome.</title>
        <authorList>
            <person name="Guen V.J."/>
            <person name="Gamble C."/>
            <person name="Flajolet M."/>
            <person name="Unger S."/>
            <person name="Thollet A."/>
            <person name="Ferandin Y."/>
            <person name="Superti-Furga A."/>
            <person name="Cohen P.A."/>
            <person name="Meijer L."/>
            <person name="Colas P."/>
        </authorList>
    </citation>
    <scope>FUNCTION</scope>
    <scope>CATALYTIC ACTIVITY</scope>
    <scope>INTERACTION WITH CCNQ</scope>
</reference>
<reference key="13">
    <citation type="journal article" date="2016" name="Cell Cycle">
        <title>STAR syndrome-associated CDK10/Cyclin M regulates actin network architecture and ciliogenesis.</title>
        <authorList>
            <person name="Guen V.J."/>
            <person name="Gamble C."/>
            <person name="Perez D.E."/>
            <person name="Bourassa S."/>
            <person name="Zappel H."/>
            <person name="Gaertner J."/>
            <person name="Lees J.A."/>
            <person name="Colas P."/>
        </authorList>
    </citation>
    <scope>FUNCTION</scope>
    <scope>SUBCELLULAR LOCATION</scope>
    <scope>INTERACTION WITH PRK2</scope>
</reference>
<reference key="14">
    <citation type="journal article" date="2017" name="Am. J. Hum. Genet.">
        <title>CDK10 mutations in humans and mice cause severe growth retardation, spine malformations, and developmental delays.</title>
        <authorList>
            <person name="Windpassinger C."/>
            <person name="Piard J."/>
            <person name="Bonnard C."/>
            <person name="Alfadhel M."/>
            <person name="Lim S."/>
            <person name="Bisteau X."/>
            <person name="Blouin S."/>
            <person name="Ali N.B."/>
            <person name="Ng A.Y.J."/>
            <person name="Lu H."/>
            <person name="Tohari S."/>
            <person name="Talib S.Z.A."/>
            <person name="van Hul N."/>
            <person name="Caldez M.J."/>
            <person name="Van Maldergem L."/>
            <person name="Yigit G."/>
            <person name="Kayserili H."/>
            <person name="Youssef S.A."/>
            <person name="Coppola V."/>
            <person name="de Bruin A."/>
            <person name="Tessarollo L."/>
            <person name="Choi H."/>
            <person name="Rupp V."/>
            <person name="Roetzer K."/>
            <person name="Roschger P."/>
            <person name="Klaushofer K."/>
            <person name="Altmueller J."/>
            <person name="Roy S."/>
            <person name="Venkatesh B."/>
            <person name="Ganger R."/>
            <person name="Grill F."/>
            <person name="Ben Chehida F."/>
            <person name="Wollnik B."/>
            <person name="Altunoglu U."/>
            <person name="Al Kaissi A."/>
            <person name="Reversade B."/>
            <person name="Kaldis P."/>
        </authorList>
    </citation>
    <scope>INVOLVEMENT IN ALKAS</scope>
</reference>
<reference key="15">
    <citation type="journal article" date="2007" name="Nature">
        <title>Patterns of somatic mutation in human cancer genomes.</title>
        <authorList>
            <person name="Greenman C."/>
            <person name="Stephens P."/>
            <person name="Smith R."/>
            <person name="Dalgliesh G.L."/>
            <person name="Hunter C."/>
            <person name="Bignell G."/>
            <person name="Davies H."/>
            <person name="Teague J."/>
            <person name="Butler A."/>
            <person name="Stevens C."/>
            <person name="Edkins S."/>
            <person name="O'Meara S."/>
            <person name="Vastrik I."/>
            <person name="Schmidt E.E."/>
            <person name="Avis T."/>
            <person name="Barthorpe S."/>
            <person name="Bhamra G."/>
            <person name="Buck G."/>
            <person name="Choudhury B."/>
            <person name="Clements J."/>
            <person name="Cole J."/>
            <person name="Dicks E."/>
            <person name="Forbes S."/>
            <person name="Gray K."/>
            <person name="Halliday K."/>
            <person name="Harrison R."/>
            <person name="Hills K."/>
            <person name="Hinton J."/>
            <person name="Jenkinson A."/>
            <person name="Jones D."/>
            <person name="Menzies A."/>
            <person name="Mironenko T."/>
            <person name="Perry J."/>
            <person name="Raine K."/>
            <person name="Richardson D."/>
            <person name="Shepherd R."/>
            <person name="Small A."/>
            <person name="Tofts C."/>
            <person name="Varian J."/>
            <person name="Webb T."/>
            <person name="West S."/>
            <person name="Widaa S."/>
            <person name="Yates A."/>
            <person name="Cahill D.P."/>
            <person name="Louis D.N."/>
            <person name="Goldstraw P."/>
            <person name="Nicholson A.G."/>
            <person name="Brasseur F."/>
            <person name="Looijenga L."/>
            <person name="Weber B.L."/>
            <person name="Chiew Y.-E."/>
            <person name="DeFazio A."/>
            <person name="Greaves M.F."/>
            <person name="Green A.R."/>
            <person name="Campbell P."/>
            <person name="Birney E."/>
            <person name="Easton D.F."/>
            <person name="Chenevix-Trench G."/>
            <person name="Tan M.-H."/>
            <person name="Khoo S.K."/>
            <person name="Teh B.T."/>
            <person name="Yuen S.T."/>
            <person name="Leung S.Y."/>
            <person name="Wooster R."/>
            <person name="Futreal P.A."/>
            <person name="Stratton M.R."/>
        </authorList>
    </citation>
    <scope>VARIANTS [LARGE SCALE ANALYSIS] LEU-96; SER-168; HIS-342 AND TYR-358</scope>
</reference>
<keyword id="KW-0025">Alternative splicing</keyword>
<keyword id="KW-0067">ATP-binding</keyword>
<keyword id="KW-0966">Cell projection</keyword>
<keyword id="KW-0970">Cilium biogenesis/degradation</keyword>
<keyword id="KW-0963">Cytoplasm</keyword>
<keyword id="KW-0206">Cytoskeleton</keyword>
<keyword id="KW-0418">Kinase</keyword>
<keyword id="KW-0547">Nucleotide-binding</keyword>
<keyword id="KW-0597">Phosphoprotein</keyword>
<keyword id="KW-1267">Proteomics identification</keyword>
<keyword id="KW-1185">Reference proteome</keyword>
<keyword id="KW-0723">Serine/threonine-protein kinase</keyword>
<keyword id="KW-0808">Transferase</keyword>
<dbReference type="EC" id="2.7.11.22"/>
<dbReference type="EMBL" id="L33264">
    <property type="protein sequence ID" value="AAA60092.2"/>
    <property type="molecule type" value="mRNA"/>
</dbReference>
<dbReference type="EMBL" id="X78342">
    <property type="protein sequence ID" value="CAA55137.1"/>
    <property type="molecule type" value="mRNA"/>
</dbReference>
<dbReference type="EMBL" id="AJ010341">
    <property type="protein sequence ID" value="CAB37619.1"/>
    <property type="molecule type" value="Genomic_DNA"/>
</dbReference>
<dbReference type="EMBL" id="AJ010342">
    <property type="protein sequence ID" value="CAB37619.1"/>
    <property type="status" value="JOINED"/>
    <property type="molecule type" value="Genomic_DNA"/>
</dbReference>
<dbReference type="EMBL" id="AJ010343">
    <property type="protein sequence ID" value="CAB37619.1"/>
    <property type="status" value="JOINED"/>
    <property type="molecule type" value="Genomic_DNA"/>
</dbReference>
<dbReference type="EMBL" id="AJ010344">
    <property type="protein sequence ID" value="CAB37619.1"/>
    <property type="status" value="JOINED"/>
    <property type="molecule type" value="Genomic_DNA"/>
</dbReference>
<dbReference type="EMBL" id="AM392903">
    <property type="protein sequence ID" value="CAL37781.1"/>
    <property type="molecule type" value="mRNA"/>
</dbReference>
<dbReference type="EMBL" id="AK075036">
    <property type="protein sequence ID" value="BAG52055.1"/>
    <property type="molecule type" value="mRNA"/>
</dbReference>
<dbReference type="EMBL" id="AK290485">
    <property type="protein sequence ID" value="BAF83174.1"/>
    <property type="molecule type" value="mRNA"/>
</dbReference>
<dbReference type="EMBL" id="AK292351">
    <property type="protein sequence ID" value="BAF85040.1"/>
    <property type="molecule type" value="mRNA"/>
</dbReference>
<dbReference type="EMBL" id="AK296631">
    <property type="protein sequence ID" value="BAH12406.1"/>
    <property type="molecule type" value="mRNA"/>
</dbReference>
<dbReference type="EMBL" id="AM393177">
    <property type="protein sequence ID" value="CAL38055.1"/>
    <property type="molecule type" value="mRNA"/>
</dbReference>
<dbReference type="EMBL" id="AM393204">
    <property type="protein sequence ID" value="CAL38082.1"/>
    <property type="molecule type" value="mRNA"/>
</dbReference>
<dbReference type="EMBL" id="AC010538">
    <property type="status" value="NOT_ANNOTATED_CDS"/>
    <property type="molecule type" value="Genomic_DNA"/>
</dbReference>
<dbReference type="EMBL" id="CH471184">
    <property type="protein sequence ID" value="EAW66701.1"/>
    <property type="molecule type" value="Genomic_DNA"/>
</dbReference>
<dbReference type="EMBL" id="CH471184">
    <property type="protein sequence ID" value="EAW66703.1"/>
    <property type="molecule type" value="Genomic_DNA"/>
</dbReference>
<dbReference type="EMBL" id="CH471184">
    <property type="protein sequence ID" value="EAW66704.1"/>
    <property type="molecule type" value="Genomic_DNA"/>
</dbReference>
<dbReference type="EMBL" id="CH471184">
    <property type="protein sequence ID" value="EAW66705.1"/>
    <property type="molecule type" value="Genomic_DNA"/>
</dbReference>
<dbReference type="EMBL" id="CH471184">
    <property type="protein sequence ID" value="EAW66706.1"/>
    <property type="molecule type" value="Genomic_DNA"/>
</dbReference>
<dbReference type="EMBL" id="CH471184">
    <property type="protein sequence ID" value="EAW66707.1"/>
    <property type="molecule type" value="Genomic_DNA"/>
</dbReference>
<dbReference type="EMBL" id="CH471184">
    <property type="protein sequence ID" value="EAW66708.1"/>
    <property type="molecule type" value="Genomic_DNA"/>
</dbReference>
<dbReference type="EMBL" id="CH471184">
    <property type="protein sequence ID" value="EAW66710.1"/>
    <property type="molecule type" value="Genomic_DNA"/>
</dbReference>
<dbReference type="EMBL" id="BC017342">
    <property type="protein sequence ID" value="AAH17342.1"/>
    <property type="molecule type" value="mRNA"/>
</dbReference>
<dbReference type="EMBL" id="BC025301">
    <property type="protein sequence ID" value="AAH25301.1"/>
    <property type="molecule type" value="mRNA"/>
</dbReference>
<dbReference type="CCDS" id="CCDS10984.2">
    <molecule id="Q15131-1"/>
</dbReference>
<dbReference type="CCDS" id="CCDS32514.2">
    <molecule id="Q15131-4"/>
</dbReference>
<dbReference type="PIR" id="S49330">
    <property type="entry name" value="S49330"/>
</dbReference>
<dbReference type="RefSeq" id="NP_001092003.2">
    <molecule id="Q15131-3"/>
    <property type="nucleotide sequence ID" value="NM_001098533.3"/>
</dbReference>
<dbReference type="RefSeq" id="NP_001153839.1">
    <molecule id="Q15131-2"/>
    <property type="nucleotide sequence ID" value="NM_001160367.2"/>
</dbReference>
<dbReference type="RefSeq" id="NP_443713.2">
    <molecule id="Q15131-4"/>
    <property type="nucleotide sequence ID" value="NM_052987.4"/>
</dbReference>
<dbReference type="RefSeq" id="NP_443714.3">
    <molecule id="Q15131-1"/>
    <property type="nucleotide sequence ID" value="NM_052988.4"/>
</dbReference>
<dbReference type="RefSeq" id="XP_016879297.1">
    <property type="nucleotide sequence ID" value="XM_017023808.1"/>
</dbReference>
<dbReference type="RefSeq" id="XP_016879298.1">
    <property type="nucleotide sequence ID" value="XM_017023809.1"/>
</dbReference>
<dbReference type="RefSeq" id="XP_016879299.1">
    <molecule id="Q15131-4"/>
    <property type="nucleotide sequence ID" value="XM_017023810.2"/>
</dbReference>
<dbReference type="RefSeq" id="XP_054170218.1">
    <molecule id="Q15131-4"/>
    <property type="nucleotide sequence ID" value="XM_054314243.1"/>
</dbReference>
<dbReference type="SMR" id="Q15131"/>
<dbReference type="BioGRID" id="114128">
    <property type="interactions" value="54"/>
</dbReference>
<dbReference type="ComplexPortal" id="CPX-326">
    <molecule id="Q15131-1"/>
    <property type="entry name" value="Cyclin M-CDK10 complex"/>
</dbReference>
<dbReference type="CORUM" id="Q15131"/>
<dbReference type="FunCoup" id="Q15131">
    <property type="interactions" value="1128"/>
</dbReference>
<dbReference type="IntAct" id="Q15131">
    <property type="interactions" value="35"/>
</dbReference>
<dbReference type="MINT" id="Q15131"/>
<dbReference type="STRING" id="9606.ENSP00000338673"/>
<dbReference type="BindingDB" id="Q15131"/>
<dbReference type="ChEMBL" id="CHEMBL1795191"/>
<dbReference type="iPTMnet" id="Q15131"/>
<dbReference type="PhosphoSitePlus" id="Q15131"/>
<dbReference type="BioMuta" id="CDK10"/>
<dbReference type="DMDM" id="6226784"/>
<dbReference type="CPTAC" id="non-CPTAC-2943"/>
<dbReference type="CPTAC" id="non-CPTAC-2944"/>
<dbReference type="CPTAC" id="non-CPTAC-5662"/>
<dbReference type="CPTAC" id="non-CPTAC-5663"/>
<dbReference type="jPOST" id="Q15131"/>
<dbReference type="MassIVE" id="Q15131"/>
<dbReference type="PaxDb" id="9606-ENSP00000338673"/>
<dbReference type="PeptideAtlas" id="Q15131"/>
<dbReference type="ProteomicsDB" id="60454">
    <molecule id="Q15131-1"/>
</dbReference>
<dbReference type="ProteomicsDB" id="60455">
    <molecule id="Q15131-2"/>
</dbReference>
<dbReference type="ProteomicsDB" id="60456">
    <molecule id="Q15131-3"/>
</dbReference>
<dbReference type="ProteomicsDB" id="60457">
    <molecule id="Q15131-4"/>
</dbReference>
<dbReference type="Pumba" id="Q15131"/>
<dbReference type="Antibodypedia" id="30892">
    <property type="antibodies" value="321 antibodies from 34 providers"/>
</dbReference>
<dbReference type="DNASU" id="8558"/>
<dbReference type="Ensembl" id="ENST00000353379.12">
    <molecule id="Q15131-1"/>
    <property type="protein sequence ID" value="ENSP00000338673.7"/>
    <property type="gene ID" value="ENSG00000185324.22"/>
</dbReference>
<dbReference type="Ensembl" id="ENST00000505473.5">
    <molecule id="Q15131-4"/>
    <property type="protein sequence ID" value="ENSP00000424415.1"/>
    <property type="gene ID" value="ENSG00000185324.22"/>
</dbReference>
<dbReference type="Ensembl" id="ENST00000617879.1">
    <molecule id="Q15131-4"/>
    <property type="protein sequence ID" value="ENSP00000484357.1"/>
    <property type="gene ID" value="ENSG00000185324.22"/>
</dbReference>
<dbReference type="GeneID" id="8558"/>
<dbReference type="KEGG" id="hsa:8558"/>
<dbReference type="MANE-Select" id="ENST00000353379.12">
    <property type="protein sequence ID" value="ENSP00000338673.7"/>
    <property type="RefSeq nucleotide sequence ID" value="NM_052988.5"/>
    <property type="RefSeq protein sequence ID" value="NP_443714.3"/>
</dbReference>
<dbReference type="UCSC" id="uc002fod.4">
    <molecule id="Q15131-1"/>
    <property type="organism name" value="human"/>
</dbReference>
<dbReference type="AGR" id="HGNC:1770"/>
<dbReference type="CTD" id="8558"/>
<dbReference type="DisGeNET" id="8558"/>
<dbReference type="GeneCards" id="CDK10"/>
<dbReference type="HGNC" id="HGNC:1770">
    <property type="gene designation" value="CDK10"/>
</dbReference>
<dbReference type="HPA" id="ENSG00000185324">
    <property type="expression patterns" value="Low tissue specificity"/>
</dbReference>
<dbReference type="MalaCards" id="CDK10"/>
<dbReference type="MIM" id="603464">
    <property type="type" value="gene"/>
</dbReference>
<dbReference type="MIM" id="617694">
    <property type="type" value="phenotype"/>
</dbReference>
<dbReference type="neXtProt" id="NX_Q15131"/>
<dbReference type="OpenTargets" id="ENSG00000185324"/>
<dbReference type="PharmGKB" id="PA26307"/>
<dbReference type="VEuPathDB" id="HostDB:ENSG00000185324"/>
<dbReference type="eggNOG" id="KOG0663">
    <property type="taxonomic scope" value="Eukaryota"/>
</dbReference>
<dbReference type="GeneTree" id="ENSGT00940000158102"/>
<dbReference type="InParanoid" id="Q15131"/>
<dbReference type="OMA" id="WVARATN"/>
<dbReference type="OrthoDB" id="1732493at2759"/>
<dbReference type="PAN-GO" id="Q15131">
    <property type="GO annotations" value="4 GO annotations based on evolutionary models"/>
</dbReference>
<dbReference type="PhylomeDB" id="Q15131"/>
<dbReference type="TreeFam" id="TF101026"/>
<dbReference type="BRENDA" id="2.7.11.22">
    <property type="organism ID" value="2681"/>
</dbReference>
<dbReference type="PathwayCommons" id="Q15131"/>
<dbReference type="SignaLink" id="Q15131"/>
<dbReference type="SIGNOR" id="Q15131"/>
<dbReference type="BioGRID-ORCS" id="8558">
    <property type="hits" value="46 hits in 1197 CRISPR screens"/>
</dbReference>
<dbReference type="ChiTaRS" id="CDK10">
    <property type="organism name" value="human"/>
</dbReference>
<dbReference type="GeneWiki" id="Cyclin-dependent_kinase_10"/>
<dbReference type="GenomeRNAi" id="8558"/>
<dbReference type="Pharos" id="Q15131">
    <property type="development level" value="Tchem"/>
</dbReference>
<dbReference type="PRO" id="PR:Q15131"/>
<dbReference type="Proteomes" id="UP000005640">
    <property type="component" value="Chromosome 16"/>
</dbReference>
<dbReference type="RNAct" id="Q15131">
    <property type="molecule type" value="protein"/>
</dbReference>
<dbReference type="Bgee" id="ENSG00000185324">
    <property type="expression patterns" value="Expressed in right uterine tube and 198 other cell types or tissues"/>
</dbReference>
<dbReference type="ExpressionAtlas" id="Q15131">
    <property type="expression patterns" value="baseline and differential"/>
</dbReference>
<dbReference type="GO" id="GO:0036064">
    <property type="term" value="C:ciliary basal body"/>
    <property type="evidence" value="ECO:0000314"/>
    <property type="project" value="UniProtKB"/>
</dbReference>
<dbReference type="GO" id="GO:0000307">
    <property type="term" value="C:cyclin-dependent protein kinase holoenzyme complex"/>
    <property type="evidence" value="ECO:0000353"/>
    <property type="project" value="ComplexPortal"/>
</dbReference>
<dbReference type="GO" id="GO:0005737">
    <property type="term" value="C:cytoplasm"/>
    <property type="evidence" value="ECO:0007669"/>
    <property type="project" value="UniProtKB-KW"/>
</dbReference>
<dbReference type="GO" id="GO:0005634">
    <property type="term" value="C:nucleus"/>
    <property type="evidence" value="ECO:0000314"/>
    <property type="project" value="MGI"/>
</dbReference>
<dbReference type="GO" id="GO:0005524">
    <property type="term" value="F:ATP binding"/>
    <property type="evidence" value="ECO:0007669"/>
    <property type="project" value="UniProtKB-KW"/>
</dbReference>
<dbReference type="GO" id="GO:0004693">
    <property type="term" value="F:cyclin-dependent protein serine/threonine kinase activity"/>
    <property type="evidence" value="ECO:0000304"/>
    <property type="project" value="ProtInc"/>
</dbReference>
<dbReference type="GO" id="GO:0106310">
    <property type="term" value="F:protein serine kinase activity"/>
    <property type="evidence" value="ECO:0007669"/>
    <property type="project" value="RHEA"/>
</dbReference>
<dbReference type="GO" id="GO:0004674">
    <property type="term" value="F:protein serine/threonine kinase activity"/>
    <property type="evidence" value="ECO:0000314"/>
    <property type="project" value="UniProtKB"/>
</dbReference>
<dbReference type="GO" id="GO:0030030">
    <property type="term" value="P:cell projection organization"/>
    <property type="evidence" value="ECO:0007669"/>
    <property type="project" value="UniProtKB-KW"/>
</dbReference>
<dbReference type="GO" id="GO:0008285">
    <property type="term" value="P:negative regulation of cell population proliferation"/>
    <property type="evidence" value="ECO:0000304"/>
    <property type="project" value="ProtInc"/>
</dbReference>
<dbReference type="GO" id="GO:1902018">
    <property type="term" value="P:negative regulation of cilium assembly"/>
    <property type="evidence" value="ECO:0000315"/>
    <property type="project" value="UniProtKB"/>
</dbReference>
<dbReference type="GO" id="GO:0018107">
    <property type="term" value="P:peptidyl-threonine phosphorylation"/>
    <property type="evidence" value="ECO:0000314"/>
    <property type="project" value="UniProtKB"/>
</dbReference>
<dbReference type="GO" id="GO:0043410">
    <property type="term" value="P:positive regulation of MAPK cascade"/>
    <property type="evidence" value="ECO:0007669"/>
    <property type="project" value="Ensembl"/>
</dbReference>
<dbReference type="GO" id="GO:0032956">
    <property type="term" value="P:regulation of actin cytoskeleton organization"/>
    <property type="evidence" value="ECO:0000315"/>
    <property type="project" value="UniProtKB"/>
</dbReference>
<dbReference type="GO" id="GO:0051726">
    <property type="term" value="P:regulation of cell cycle"/>
    <property type="evidence" value="ECO:0000318"/>
    <property type="project" value="GO_Central"/>
</dbReference>
<dbReference type="GO" id="GO:1902749">
    <property type="term" value="P:regulation of cell cycle G2/M phase transition"/>
    <property type="evidence" value="ECO:0000314"/>
    <property type="project" value="ComplexPortal"/>
</dbReference>
<dbReference type="GO" id="GO:0007089">
    <property type="term" value="P:traversing start control point of mitotic cell cycle"/>
    <property type="evidence" value="ECO:0000304"/>
    <property type="project" value="ProtInc"/>
</dbReference>
<dbReference type="CDD" id="cd07845">
    <property type="entry name" value="STKc_CDK10"/>
    <property type="match status" value="1"/>
</dbReference>
<dbReference type="FunFam" id="1.10.510.10:FF:000289">
    <property type="entry name" value="cyclin-dependent kinase 10 isoform X2"/>
    <property type="match status" value="1"/>
</dbReference>
<dbReference type="FunFam" id="3.30.200.20:FF:000256">
    <property type="entry name" value="cyclin-dependent kinase 10 isoform X2"/>
    <property type="match status" value="1"/>
</dbReference>
<dbReference type="Gene3D" id="3.30.200.20">
    <property type="entry name" value="Phosphorylase Kinase, domain 1"/>
    <property type="match status" value="1"/>
</dbReference>
<dbReference type="Gene3D" id="1.10.510.10">
    <property type="entry name" value="Transferase(Phosphotransferase) domain 1"/>
    <property type="match status" value="1"/>
</dbReference>
<dbReference type="InterPro" id="IPR050108">
    <property type="entry name" value="CDK"/>
</dbReference>
<dbReference type="InterPro" id="IPR011009">
    <property type="entry name" value="Kinase-like_dom_sf"/>
</dbReference>
<dbReference type="InterPro" id="IPR000719">
    <property type="entry name" value="Prot_kinase_dom"/>
</dbReference>
<dbReference type="InterPro" id="IPR017441">
    <property type="entry name" value="Protein_kinase_ATP_BS"/>
</dbReference>
<dbReference type="InterPro" id="IPR008271">
    <property type="entry name" value="Ser/Thr_kinase_AS"/>
</dbReference>
<dbReference type="InterPro" id="IPR044093">
    <property type="entry name" value="STKc_CDK10"/>
</dbReference>
<dbReference type="PANTHER" id="PTHR24056">
    <property type="entry name" value="CELL DIVISION PROTEIN KINASE"/>
    <property type="match status" value="1"/>
</dbReference>
<dbReference type="PANTHER" id="PTHR24056:SF508">
    <property type="entry name" value="CYCLIN-DEPENDENT KINASE 10"/>
    <property type="match status" value="1"/>
</dbReference>
<dbReference type="Pfam" id="PF00069">
    <property type="entry name" value="Pkinase"/>
    <property type="match status" value="1"/>
</dbReference>
<dbReference type="SMART" id="SM00220">
    <property type="entry name" value="S_TKc"/>
    <property type="match status" value="1"/>
</dbReference>
<dbReference type="SUPFAM" id="SSF56112">
    <property type="entry name" value="Protein kinase-like (PK-like)"/>
    <property type="match status" value="1"/>
</dbReference>
<dbReference type="PROSITE" id="PS00107">
    <property type="entry name" value="PROTEIN_KINASE_ATP"/>
    <property type="match status" value="1"/>
</dbReference>
<dbReference type="PROSITE" id="PS50011">
    <property type="entry name" value="PROTEIN_KINASE_DOM"/>
    <property type="match status" value="1"/>
</dbReference>
<dbReference type="PROSITE" id="PS00108">
    <property type="entry name" value="PROTEIN_KINASE_ST"/>
    <property type="match status" value="1"/>
</dbReference>
<proteinExistence type="evidence at protein level"/>
<sequence>MAEPDLECEQIRLKCIRKEGFFTVPPEHRLGRCRSVKEFEKLNRIGEGTYGIVYRARDTQTDEIVALKKVRMDKEKDGIPISSLREITLLLRLRHPNIVELKEVVVGNHLESIFLVMGYCEQDLASLLENMPTPFSEAQVKCIVLQVLRGLQYLHRNFIIHRDLKVSNLLMTDKGCVKTADFGLARAYGVPVKPMTPKVVTLWYRAPELLLGTTTQTTSIDMWAVGCILAELLAHRPLLPGTSEIHQIDLIVQLLGTPSENIWPGFSKLPLVGQYSLRKQPYNNLKHKFPWLSEAGLRLLHFLFMYDPKKRATAGDCLESSYFKEKPLPCEPELMPTFPHHRNKRAAPATSEGQSKRCKP</sequence>
<protein>
    <recommendedName>
        <fullName>Cyclin-dependent kinase 10</fullName>
        <ecNumber>2.7.11.22</ecNumber>
    </recommendedName>
    <alternativeName>
        <fullName>Cell division protein kinase 10</fullName>
    </alternativeName>
    <alternativeName>
        <fullName>Serine/threonine-protein kinase PISSLRE</fullName>
    </alternativeName>
</protein>
<accession>Q15131</accession>
<accession>A8K370</accession>
<accession>A8K8I6</accession>
<accession>A8MXU6</accession>
<accession>B3KQJ3</accession>
<accession>B7Z420</accession>
<accession>D3DX82</accession>
<accession>D3DX83</accession>
<accession>Q0VGZ7</accession>
<accession>Q15130</accession>
<accession>Q6PJC0</accession>
<name>CDK10_HUMAN</name>
<evidence type="ECO:0000255" key="1">
    <source>
        <dbReference type="PROSITE-ProRule" id="PRU00159"/>
    </source>
</evidence>
<evidence type="ECO:0000255" key="2">
    <source>
        <dbReference type="PROSITE-ProRule" id="PRU10027"/>
    </source>
</evidence>
<evidence type="ECO:0000256" key="3">
    <source>
        <dbReference type="SAM" id="MobiDB-lite"/>
    </source>
</evidence>
<evidence type="ECO:0000269" key="4">
    <source>
    </source>
</evidence>
<evidence type="ECO:0000269" key="5">
    <source>
    </source>
</evidence>
<evidence type="ECO:0000269" key="6">
    <source>
    </source>
</evidence>
<evidence type="ECO:0000269" key="7">
    <source>
    </source>
</evidence>
<evidence type="ECO:0000303" key="8">
    <source>
    </source>
</evidence>
<evidence type="ECO:0000303" key="9">
    <source>
    </source>
</evidence>
<evidence type="ECO:0000303" key="10">
    <source>
    </source>
</evidence>
<evidence type="ECO:0000303" key="11">
    <source ref="6"/>
</evidence>
<evidence type="ECO:0000305" key="12"/>
<evidence type="ECO:0007744" key="13">
    <source>
    </source>
</evidence>
<evidence type="ECO:0007744" key="14">
    <source>
    </source>
</evidence>
<comment type="function">
    <text evidence="5 6">Cyclin-dependent kinase that phosphorylates the transcription factor ETS2 (in vitro) and positively controls its proteasomal degradation (in cells) (PubMed:24218572). Involved in the regulation of actin cytoskeleton organization through the phosphorylation of actin dynamics regulators such as PKN2. Is a negative regulator of ciliogenesis through phosphorylation of PKN2 and promotion of RhoA signaling (PubMed:27104747).</text>
</comment>
<comment type="catalytic activity">
    <reaction evidence="5">
        <text>L-seryl-[protein] + ATP = O-phospho-L-seryl-[protein] + ADP + H(+)</text>
        <dbReference type="Rhea" id="RHEA:17989"/>
        <dbReference type="Rhea" id="RHEA-COMP:9863"/>
        <dbReference type="Rhea" id="RHEA-COMP:11604"/>
        <dbReference type="ChEBI" id="CHEBI:15378"/>
        <dbReference type="ChEBI" id="CHEBI:29999"/>
        <dbReference type="ChEBI" id="CHEBI:30616"/>
        <dbReference type="ChEBI" id="CHEBI:83421"/>
        <dbReference type="ChEBI" id="CHEBI:456216"/>
        <dbReference type="EC" id="2.7.11.22"/>
    </reaction>
</comment>
<comment type="catalytic activity">
    <reaction evidence="5">
        <text>L-threonyl-[protein] + ATP = O-phospho-L-threonyl-[protein] + ADP + H(+)</text>
        <dbReference type="Rhea" id="RHEA:46608"/>
        <dbReference type="Rhea" id="RHEA-COMP:11060"/>
        <dbReference type="Rhea" id="RHEA-COMP:11605"/>
        <dbReference type="ChEBI" id="CHEBI:15378"/>
        <dbReference type="ChEBI" id="CHEBI:30013"/>
        <dbReference type="ChEBI" id="CHEBI:30616"/>
        <dbReference type="ChEBI" id="CHEBI:61977"/>
        <dbReference type="ChEBI" id="CHEBI:456216"/>
        <dbReference type="EC" id="2.7.11.22"/>
    </reaction>
</comment>
<comment type="subunit">
    <text evidence="5 6">Heterodimer with CCNQ, the interaction is required for kinase activity. Interacts with ETS2. Interacts with PRK2 (PubMed:27104747).</text>
</comment>
<comment type="interaction">
    <interactant intactId="EBI-1646959">
        <id>Q15131</id>
    </interactant>
    <interactant intactId="EBI-1646991">
        <id>P15036</id>
        <label>ETS2</label>
    </interactant>
    <organismsDiffer>false</organismsDiffer>
    <experiments>2</experiments>
</comment>
<comment type="interaction">
    <interactant intactId="EBI-1646959">
        <id>Q15131</id>
    </interactant>
    <interactant intactId="EBI-352572">
        <id>P08238</id>
        <label>HSP90AB1</label>
    </interactant>
    <organismsDiffer>false</organismsDiffer>
    <experiments>3</experiments>
</comment>
<comment type="interaction">
    <interactant intactId="EBI-1646959">
        <id>Q15131</id>
    </interactant>
    <interactant intactId="EBI-351896">
        <id>P11142</id>
        <label>HSPA8</label>
    </interactant>
    <organismsDiffer>false</organismsDiffer>
    <experiments>2</experiments>
</comment>
<comment type="interaction">
    <interactant intactId="EBI-1646959">
        <id>Q15131</id>
    </interactant>
    <interactant intactId="EBI-714158">
        <id>Q13526</id>
        <label>PIN1</label>
    </interactant>
    <organismsDiffer>false</organismsDiffer>
    <experiments>5</experiments>
</comment>
<comment type="interaction">
    <interactant intactId="EBI-11507283">
        <id>Q15131-1</id>
    </interactant>
    <interactant intactId="EBI-3925043">
        <id>Q8N1B3</id>
        <label>CCNQ</label>
    </interactant>
    <organismsDiffer>false</organismsDiffer>
    <experiments>7</experiments>
</comment>
<comment type="subcellular location">
    <subcellularLocation>
        <location evidence="6">Cytoplasm</location>
        <location evidence="6">Cytoskeleton</location>
        <location evidence="6">Cilium basal body</location>
    </subcellularLocation>
</comment>
<comment type="alternative products">
    <event type="alternative splicing"/>
    <isoform>
        <id>Q15131-1</id>
        <name>1</name>
        <sequence type="displayed"/>
    </isoform>
    <isoform>
        <id>Q15131-2</id>
        <name>2</name>
        <sequence type="described" ref="VSP_021642"/>
    </isoform>
    <isoform>
        <id>Q15131-3</id>
        <name>3</name>
        <sequence type="described" ref="VSP_021642 VSP_021643"/>
    </isoform>
    <isoform>
        <id>Q15131-4</id>
        <name>4</name>
        <sequence type="described" ref="VSP_021642 VSP_021644"/>
    </isoform>
    <isoform>
        <id>Q15131-5</id>
        <name>5</name>
        <sequence type="described" ref="VSP_054969 VSP_054972 VSP_054973"/>
    </isoform>
    <isoform>
        <id>Q15131-6</id>
        <name>6</name>
        <sequence type="described" ref="VSP_054969 VSP_054970 VSP_054971"/>
    </isoform>
    <isoform>
        <id>Q15131-7</id>
        <name>7</name>
        <sequence type="described" ref="VSP_021642 VSP_054972"/>
    </isoform>
</comment>
<comment type="disease" evidence="7">
    <disease id="DI-05093">
        <name>Al Kaissi syndrome</name>
        <acronym>ALKAS</acronym>
        <description>An autosomal recessive developmental disorder characterized by growth retardation, spine malformation, facial dysmorphisms, and developmental delay.</description>
        <dbReference type="MIM" id="617694"/>
    </disease>
    <text>The disease is caused by variants affecting the gene represented in this entry.</text>
</comment>
<comment type="similarity">
    <text evidence="12">Belongs to the protein kinase superfamily. CMGC Ser/Thr protein kinase family. CDC2/CDKX subfamily.</text>
</comment>
<feature type="chain" id="PRO_0000085809" description="Cyclin-dependent kinase 10">
    <location>
        <begin position="1"/>
        <end position="360"/>
    </location>
</feature>
<feature type="domain" description="Protein kinase" evidence="1">
    <location>
        <begin position="39"/>
        <end position="323"/>
    </location>
</feature>
<feature type="region of interest" description="Disordered" evidence="3">
    <location>
        <begin position="334"/>
        <end position="360"/>
    </location>
</feature>
<feature type="active site" description="Proton acceptor" evidence="1 2">
    <location>
        <position position="163"/>
    </location>
</feature>
<feature type="binding site" evidence="1">
    <location>
        <begin position="45"/>
        <end position="53"/>
    </location>
    <ligand>
        <name>ATP</name>
        <dbReference type="ChEBI" id="CHEBI:30616"/>
    </ligand>
</feature>
<feature type="binding site" evidence="1">
    <location>
        <position position="68"/>
    </location>
    <ligand>
        <name>ATP</name>
        <dbReference type="ChEBI" id="CHEBI:30616"/>
    </ligand>
</feature>
<feature type="modified residue" description="Phosphothreonine" evidence="13 14">
    <location>
        <position position="196"/>
    </location>
</feature>
<feature type="splice variant" id="VSP_021642" description="In isoform 2, isoform 3, isoform 4 and isoform 7." evidence="8 9 10 11">
    <location>
        <begin position="1"/>
        <end position="71"/>
    </location>
</feature>
<feature type="splice variant" id="VSP_054969" description="In isoform 5 and isoform 6." evidence="8">
    <original>GTYGIVY</original>
    <variation>D</variation>
    <location>
        <begin position="48"/>
        <end position="54"/>
    </location>
</feature>
<feature type="splice variant" id="VSP_054970" description="In isoform 6." evidence="8">
    <original>KCIVLQVLRGLQYLHRNFII</original>
    <variation>RGRGAWGGGMGFMGPCGAHL</variation>
    <location>
        <begin position="141"/>
        <end position="160"/>
    </location>
</feature>
<feature type="splice variant" id="VSP_054971" description="In isoform 6." evidence="8">
    <location>
        <begin position="161"/>
        <end position="360"/>
    </location>
</feature>
<feature type="splice variant" id="VSP_054972" description="In isoform 5 and isoform 7." evidence="8">
    <original>ADFGLARAYGVPVKP</original>
    <variation>GGCNLGQALSLDGTW</variation>
    <location>
        <begin position="180"/>
        <end position="194"/>
    </location>
</feature>
<feature type="splice variant" id="VSP_054973" description="In isoform 5." evidence="8">
    <location>
        <begin position="195"/>
        <end position="360"/>
    </location>
</feature>
<feature type="splice variant" id="VSP_021643" description="In isoform 3." evidence="9 11">
    <location>
        <begin position="306"/>
        <end position="311"/>
    </location>
</feature>
<feature type="splice variant" id="VSP_021644" description="In isoform 4." evidence="9 10">
    <original>PCEPELMPTFPHHRNKRAAPATSEGQSKRCKP</original>
    <variation>RLPISGVCEGCREPG</variation>
    <location>
        <begin position="329"/>
        <end position="360"/>
    </location>
</feature>
<feature type="sequence variant" id="VAR_041983" description="In dbSNP:rs55819627." evidence="4">
    <original>P</original>
    <variation>L</variation>
    <location>
        <position position="96"/>
    </location>
</feature>
<feature type="sequence variant" id="VAR_041984" description="In dbSNP:rs56340740." evidence="4">
    <original>N</original>
    <variation>S</variation>
    <location>
        <position position="168"/>
    </location>
</feature>
<feature type="sequence variant" id="VAR_041985" description="In dbSNP:rs55757604." evidence="4">
    <original>R</original>
    <variation>H</variation>
    <location>
        <position position="342"/>
    </location>
</feature>
<feature type="sequence variant" id="VAR_041986" description="In dbSNP:rs56242003." evidence="4">
    <original>C</original>
    <variation>Y</variation>
    <location>
        <position position="358"/>
    </location>
</feature>